<proteinExistence type="inferred from homology"/>
<reference key="1">
    <citation type="journal article" date="2008" name="BMC Genomics">
        <title>Comparative genomic analysis of the gut bacterium Bifidobacterium longum reveals loci susceptible to deletion during pure culture growth.</title>
        <authorList>
            <person name="Lee J.H."/>
            <person name="Karamychev V.N."/>
            <person name="Kozyavkin S.A."/>
            <person name="Mills D."/>
            <person name="Pavlov A.R."/>
            <person name="Pavlova N.V."/>
            <person name="Polouchine N.N."/>
            <person name="Richardson P.M."/>
            <person name="Shakhova V.V."/>
            <person name="Slesarev A.I."/>
            <person name="Weimer B."/>
            <person name="O'Sullivan D.J."/>
        </authorList>
    </citation>
    <scope>NUCLEOTIDE SEQUENCE [LARGE SCALE GENOMIC DNA]</scope>
    <source>
        <strain>DJO10A</strain>
    </source>
</reference>
<feature type="chain" id="PRO_1000096122" description="Elongation factor P">
    <location>
        <begin position="1"/>
        <end position="188"/>
    </location>
</feature>
<gene>
    <name evidence="1" type="primary">efp</name>
    <name type="ordered locus">BLD_0082</name>
</gene>
<sequence>MAQTTNDIKNGSVLNLDGQLWTVMKFQHVKPGKGPAFVRTTIKNVLSGKIVDKTFNAGMKMEFETVDNRTLQYSYEDGDNFVFMDMTTYDQIMVPKTLLGDKAKFLLEGTDCLVSFHDGTPLSVDLPGSVVLTITHTEPGLQGNRSNAGTKPATVETGAEIQVPLFINEGDRVKINTEDGSYTGRENN</sequence>
<organism>
    <name type="scientific">Bifidobacterium longum (strain DJO10A)</name>
    <dbReference type="NCBI Taxonomy" id="205913"/>
    <lineage>
        <taxon>Bacteria</taxon>
        <taxon>Bacillati</taxon>
        <taxon>Actinomycetota</taxon>
        <taxon>Actinomycetes</taxon>
        <taxon>Bifidobacteriales</taxon>
        <taxon>Bifidobacteriaceae</taxon>
        <taxon>Bifidobacterium</taxon>
    </lineage>
</organism>
<keyword id="KW-0963">Cytoplasm</keyword>
<keyword id="KW-0251">Elongation factor</keyword>
<keyword id="KW-0648">Protein biosynthesis</keyword>
<dbReference type="EMBL" id="CP000605">
    <property type="protein sequence ID" value="ACD97528.1"/>
    <property type="molecule type" value="Genomic_DNA"/>
</dbReference>
<dbReference type="RefSeq" id="WP_007056944.1">
    <property type="nucleotide sequence ID" value="NZ_AABM02000010.1"/>
</dbReference>
<dbReference type="SMR" id="B3DQ29"/>
<dbReference type="GeneID" id="69578602"/>
<dbReference type="KEGG" id="blj:BLD_0082"/>
<dbReference type="HOGENOM" id="CLU_074944_0_1_11"/>
<dbReference type="UniPathway" id="UPA00345"/>
<dbReference type="Proteomes" id="UP000002419">
    <property type="component" value="Chromosome"/>
</dbReference>
<dbReference type="GO" id="GO:0005737">
    <property type="term" value="C:cytoplasm"/>
    <property type="evidence" value="ECO:0007669"/>
    <property type="project" value="UniProtKB-SubCell"/>
</dbReference>
<dbReference type="GO" id="GO:0003746">
    <property type="term" value="F:translation elongation factor activity"/>
    <property type="evidence" value="ECO:0007669"/>
    <property type="project" value="UniProtKB-UniRule"/>
</dbReference>
<dbReference type="GO" id="GO:0043043">
    <property type="term" value="P:peptide biosynthetic process"/>
    <property type="evidence" value="ECO:0007669"/>
    <property type="project" value="InterPro"/>
</dbReference>
<dbReference type="CDD" id="cd04470">
    <property type="entry name" value="S1_EF-P_repeat_1"/>
    <property type="match status" value="1"/>
</dbReference>
<dbReference type="CDD" id="cd05794">
    <property type="entry name" value="S1_EF-P_repeat_2"/>
    <property type="match status" value="1"/>
</dbReference>
<dbReference type="FunFam" id="2.30.30.30:FF:000003">
    <property type="entry name" value="Elongation factor P"/>
    <property type="match status" value="1"/>
</dbReference>
<dbReference type="FunFam" id="2.40.50.140:FF:000004">
    <property type="entry name" value="Elongation factor P"/>
    <property type="match status" value="1"/>
</dbReference>
<dbReference type="FunFam" id="2.40.50.140:FF:000009">
    <property type="entry name" value="Elongation factor P"/>
    <property type="match status" value="1"/>
</dbReference>
<dbReference type="Gene3D" id="2.30.30.30">
    <property type="match status" value="1"/>
</dbReference>
<dbReference type="Gene3D" id="2.40.50.140">
    <property type="entry name" value="Nucleic acid-binding proteins"/>
    <property type="match status" value="2"/>
</dbReference>
<dbReference type="HAMAP" id="MF_00141">
    <property type="entry name" value="EF_P"/>
    <property type="match status" value="1"/>
</dbReference>
<dbReference type="InterPro" id="IPR015365">
    <property type="entry name" value="Elong-fact-P_C"/>
</dbReference>
<dbReference type="InterPro" id="IPR012340">
    <property type="entry name" value="NA-bd_OB-fold"/>
</dbReference>
<dbReference type="InterPro" id="IPR014722">
    <property type="entry name" value="Rib_uL2_dom2"/>
</dbReference>
<dbReference type="InterPro" id="IPR020599">
    <property type="entry name" value="Transl_elong_fac_P/YeiP"/>
</dbReference>
<dbReference type="InterPro" id="IPR013185">
    <property type="entry name" value="Transl_elong_KOW-like"/>
</dbReference>
<dbReference type="InterPro" id="IPR001059">
    <property type="entry name" value="Transl_elong_P/YeiP_cen"/>
</dbReference>
<dbReference type="InterPro" id="IPR013852">
    <property type="entry name" value="Transl_elong_P/YeiP_CS"/>
</dbReference>
<dbReference type="InterPro" id="IPR011768">
    <property type="entry name" value="Transl_elongation_fac_P"/>
</dbReference>
<dbReference type="InterPro" id="IPR008991">
    <property type="entry name" value="Translation_prot_SH3-like_sf"/>
</dbReference>
<dbReference type="NCBIfam" id="TIGR00038">
    <property type="entry name" value="efp"/>
    <property type="match status" value="1"/>
</dbReference>
<dbReference type="NCBIfam" id="NF001810">
    <property type="entry name" value="PRK00529.1"/>
    <property type="match status" value="1"/>
</dbReference>
<dbReference type="PANTHER" id="PTHR30053">
    <property type="entry name" value="ELONGATION FACTOR P"/>
    <property type="match status" value="1"/>
</dbReference>
<dbReference type="PANTHER" id="PTHR30053:SF12">
    <property type="entry name" value="ELONGATION FACTOR P (EF-P) FAMILY PROTEIN"/>
    <property type="match status" value="1"/>
</dbReference>
<dbReference type="Pfam" id="PF01132">
    <property type="entry name" value="EFP"/>
    <property type="match status" value="1"/>
</dbReference>
<dbReference type="Pfam" id="PF08207">
    <property type="entry name" value="EFP_N"/>
    <property type="match status" value="1"/>
</dbReference>
<dbReference type="Pfam" id="PF09285">
    <property type="entry name" value="Elong-fact-P_C"/>
    <property type="match status" value="1"/>
</dbReference>
<dbReference type="PIRSF" id="PIRSF005901">
    <property type="entry name" value="EF-P"/>
    <property type="match status" value="1"/>
</dbReference>
<dbReference type="SMART" id="SM01185">
    <property type="entry name" value="EFP"/>
    <property type="match status" value="1"/>
</dbReference>
<dbReference type="SMART" id="SM00841">
    <property type="entry name" value="Elong-fact-P_C"/>
    <property type="match status" value="1"/>
</dbReference>
<dbReference type="SUPFAM" id="SSF50249">
    <property type="entry name" value="Nucleic acid-binding proteins"/>
    <property type="match status" value="2"/>
</dbReference>
<dbReference type="SUPFAM" id="SSF50104">
    <property type="entry name" value="Translation proteins SH3-like domain"/>
    <property type="match status" value="1"/>
</dbReference>
<dbReference type="PROSITE" id="PS01275">
    <property type="entry name" value="EFP"/>
    <property type="match status" value="1"/>
</dbReference>
<name>EFP_BIFLD</name>
<evidence type="ECO:0000255" key="1">
    <source>
        <dbReference type="HAMAP-Rule" id="MF_00141"/>
    </source>
</evidence>
<comment type="function">
    <text evidence="1">Involved in peptide bond synthesis. Stimulates efficient translation and peptide-bond synthesis on native or reconstituted 70S ribosomes in vitro. Probably functions indirectly by altering the affinity of the ribosome for aminoacyl-tRNA, thus increasing their reactivity as acceptors for peptidyl transferase.</text>
</comment>
<comment type="pathway">
    <text evidence="1">Protein biosynthesis; polypeptide chain elongation.</text>
</comment>
<comment type="subcellular location">
    <subcellularLocation>
        <location evidence="1">Cytoplasm</location>
    </subcellularLocation>
</comment>
<comment type="similarity">
    <text evidence="1">Belongs to the elongation factor P family.</text>
</comment>
<accession>B3DQ29</accession>
<protein>
    <recommendedName>
        <fullName evidence="1">Elongation factor P</fullName>
        <shortName evidence="1">EF-P</shortName>
    </recommendedName>
</protein>